<keyword id="KW-0965">Cell junction</keyword>
<keyword id="KW-1003">Cell membrane</keyword>
<keyword id="KW-0963">Cytoplasm</keyword>
<keyword id="KW-1015">Disulfide bond</keyword>
<keyword id="KW-0325">Glycoprotein</keyword>
<keyword id="KW-0336">GPI-anchor</keyword>
<keyword id="KW-0449">Lipoprotein</keyword>
<keyword id="KW-0472">Membrane</keyword>
<keyword id="KW-1185">Reference proteome</keyword>
<keyword id="KW-0964">Secreted</keyword>
<keyword id="KW-0732">Signal</keyword>
<keyword id="KW-0812">Transmembrane</keyword>
<keyword id="KW-1133">Transmembrane helix</keyword>
<dbReference type="EMBL" id="AE014298">
    <property type="protein sequence ID" value="AAF46227.1"/>
    <property type="molecule type" value="Genomic_DNA"/>
</dbReference>
<dbReference type="EMBL" id="AY071242">
    <property type="protein sequence ID" value="AAL48864.1"/>
    <property type="molecule type" value="mRNA"/>
</dbReference>
<dbReference type="EMBL" id="KX532069">
    <property type="protein sequence ID" value="ANY27879.1"/>
    <property type="molecule type" value="mRNA"/>
</dbReference>
<dbReference type="RefSeq" id="NP_572373.1">
    <property type="nucleotide sequence ID" value="NM_132145.4"/>
</dbReference>
<dbReference type="FunCoup" id="Q9W3T7">
    <property type="interactions" value="5"/>
</dbReference>
<dbReference type="IntAct" id="Q9W3T7">
    <property type="interactions" value="1"/>
</dbReference>
<dbReference type="STRING" id="7227.FBpp0070964"/>
<dbReference type="GlyGen" id="Q9W3T7">
    <property type="glycosylation" value="1 site"/>
</dbReference>
<dbReference type="PaxDb" id="7227-FBpp0070964"/>
<dbReference type="DNASU" id="31644"/>
<dbReference type="EnsemblMetazoa" id="FBtr0071004">
    <property type="protein sequence ID" value="FBpp0070964"/>
    <property type="gene ID" value="FBgn0261284"/>
</dbReference>
<dbReference type="GeneID" id="31644"/>
<dbReference type="KEGG" id="dme:Dmel_CG14430"/>
<dbReference type="UCSC" id="CG14430-RA">
    <property type="organism name" value="d. melanogaster"/>
</dbReference>
<dbReference type="AGR" id="FB:FBgn0261284"/>
<dbReference type="CTD" id="31644"/>
<dbReference type="FlyBase" id="FBgn0261284">
    <property type="gene designation" value="bou"/>
</dbReference>
<dbReference type="VEuPathDB" id="VectorBase:FBgn0261284"/>
<dbReference type="eggNOG" id="ENOG502S46E">
    <property type="taxonomic scope" value="Eukaryota"/>
</dbReference>
<dbReference type="HOGENOM" id="CLU_144366_0_0_1"/>
<dbReference type="InParanoid" id="Q9W3T7"/>
<dbReference type="OMA" id="YDIPDIQ"/>
<dbReference type="OrthoDB" id="8188641at2759"/>
<dbReference type="BioGRID-ORCS" id="31644">
    <property type="hits" value="0 hits in 1 CRISPR screen"/>
</dbReference>
<dbReference type="GenomeRNAi" id="31644"/>
<dbReference type="Proteomes" id="UP000000803">
    <property type="component" value="Chromosome X"/>
</dbReference>
<dbReference type="Bgee" id="FBgn0261284">
    <property type="expression patterns" value="Expressed in seminal fluid secreting gland and 110 other cell types or tissues"/>
</dbReference>
<dbReference type="GO" id="GO:0016327">
    <property type="term" value="C:apicolateral plasma membrane"/>
    <property type="evidence" value="ECO:0007669"/>
    <property type="project" value="UniProtKB-SubCell"/>
</dbReference>
<dbReference type="GO" id="GO:0005938">
    <property type="term" value="C:cell cortex"/>
    <property type="evidence" value="ECO:0007669"/>
    <property type="project" value="UniProtKB-SubCell"/>
</dbReference>
<dbReference type="GO" id="GO:0005576">
    <property type="term" value="C:extracellular region"/>
    <property type="evidence" value="ECO:0000314"/>
    <property type="project" value="FlyBase"/>
</dbReference>
<dbReference type="GO" id="GO:0005886">
    <property type="term" value="C:plasma membrane"/>
    <property type="evidence" value="ECO:0000314"/>
    <property type="project" value="FlyBase"/>
</dbReference>
<dbReference type="GO" id="GO:0005918">
    <property type="term" value="C:septate junction"/>
    <property type="evidence" value="ECO:0000314"/>
    <property type="project" value="FlyBase"/>
</dbReference>
<dbReference type="GO" id="GO:0098552">
    <property type="term" value="C:side of membrane"/>
    <property type="evidence" value="ECO:0007669"/>
    <property type="project" value="UniProtKB-KW"/>
</dbReference>
<dbReference type="GO" id="GO:0032222">
    <property type="term" value="P:regulation of synaptic transmission, cholinergic"/>
    <property type="evidence" value="ECO:0007669"/>
    <property type="project" value="InterPro"/>
</dbReference>
<dbReference type="GO" id="GO:0035152">
    <property type="term" value="P:regulation of tube architecture, open tracheal system"/>
    <property type="evidence" value="ECO:0000315"/>
    <property type="project" value="FlyBase"/>
</dbReference>
<dbReference type="GO" id="GO:0019991">
    <property type="term" value="P:septate junction assembly"/>
    <property type="evidence" value="ECO:0000315"/>
    <property type="project" value="FlyBase"/>
</dbReference>
<dbReference type="GO" id="GO:0030431">
    <property type="term" value="P:sleep"/>
    <property type="evidence" value="ECO:0007669"/>
    <property type="project" value="InterPro"/>
</dbReference>
<dbReference type="CDD" id="cd23590">
    <property type="entry name" value="TFP_LU_ECD_Bou"/>
    <property type="match status" value="1"/>
</dbReference>
<dbReference type="InterPro" id="IPR031424">
    <property type="entry name" value="QVR-like"/>
</dbReference>
<dbReference type="InterPro" id="IPR050975">
    <property type="entry name" value="Sleep_regulator"/>
</dbReference>
<dbReference type="PANTHER" id="PTHR33562">
    <property type="entry name" value="ATILLA, ISOFORM B-RELATED-RELATED"/>
    <property type="match status" value="1"/>
</dbReference>
<dbReference type="PANTHER" id="PTHR33562:SF18">
    <property type="entry name" value="BOUDIN-RELATED"/>
    <property type="match status" value="1"/>
</dbReference>
<dbReference type="Pfam" id="PF17064">
    <property type="entry name" value="QVR"/>
    <property type="match status" value="1"/>
</dbReference>
<evidence type="ECO:0000255" key="1"/>
<evidence type="ECO:0000255" key="2">
    <source>
        <dbReference type="PROSITE-ProRule" id="PRU00498"/>
    </source>
</evidence>
<evidence type="ECO:0000269" key="3">
    <source>
    </source>
</evidence>
<evidence type="ECO:0000269" key="4">
    <source>
    </source>
</evidence>
<evidence type="ECO:0000303" key="5">
    <source>
    </source>
</evidence>
<evidence type="ECO:0000305" key="6"/>
<evidence type="ECO:0000305" key="7">
    <source>
    </source>
</evidence>
<evidence type="ECO:0000312" key="8">
    <source>
        <dbReference type="EMBL" id="AAL48864.1"/>
    </source>
</evidence>
<evidence type="ECO:0000312" key="9">
    <source>
        <dbReference type="EMBL" id="ANY27879.1"/>
    </source>
</evidence>
<evidence type="ECO:0000312" key="10">
    <source>
        <dbReference type="FlyBase" id="FBgn0261284"/>
    </source>
</evidence>
<evidence type="ECO:0000312" key="11">
    <source>
        <dbReference type="Proteomes" id="UP000000803"/>
    </source>
</evidence>
<organism evidence="11">
    <name type="scientific">Drosophila melanogaster</name>
    <name type="common">Fruit fly</name>
    <dbReference type="NCBI Taxonomy" id="7227"/>
    <lineage>
        <taxon>Eukaryota</taxon>
        <taxon>Metazoa</taxon>
        <taxon>Ecdysozoa</taxon>
        <taxon>Arthropoda</taxon>
        <taxon>Hexapoda</taxon>
        <taxon>Insecta</taxon>
        <taxon>Pterygota</taxon>
        <taxon>Neoptera</taxon>
        <taxon>Endopterygota</taxon>
        <taxon>Diptera</taxon>
        <taxon>Brachycera</taxon>
        <taxon>Muscomorpha</taxon>
        <taxon>Ephydroidea</taxon>
        <taxon>Drosophilidae</taxon>
        <taxon>Drosophila</taxon>
        <taxon>Sophophora</taxon>
    </lineage>
</organism>
<accession>Q9W3T7</accession>
<feature type="signal peptide" evidence="1">
    <location>
        <begin position="1"/>
        <end position="31"/>
    </location>
</feature>
<feature type="chain" id="PRO_5015100965" description="UPAR/Ly6 domain-containing protein bou" evidence="1">
    <location>
        <begin position="32"/>
        <end position="125"/>
    </location>
</feature>
<feature type="propeptide" id="PRO_0000459729" description="Removed in mature form" evidence="1">
    <location>
        <begin position="126"/>
        <end position="149"/>
    </location>
</feature>
<feature type="topological domain" description="Extracellular" evidence="6">
    <location>
        <begin position="32"/>
        <end position="126"/>
    </location>
</feature>
<feature type="transmembrane region" description="Helical" evidence="1">
    <location>
        <begin position="127"/>
        <end position="147"/>
    </location>
</feature>
<feature type="topological domain" description="Cytoplasmic" evidence="6">
    <location>
        <begin position="148"/>
        <end position="149"/>
    </location>
</feature>
<feature type="lipid moiety-binding region" description="GPI-anchor amidated asparagine" evidence="1">
    <location>
        <position position="125"/>
    </location>
</feature>
<feature type="glycosylation site" description="N-linked (GlcNAc...) asparagine" evidence="2">
    <location>
        <position position="64"/>
    </location>
</feature>
<feature type="disulfide bond" evidence="7">
    <location>
        <begin position="34"/>
        <end position="74"/>
    </location>
</feature>
<feature type="disulfide bond" evidence="7">
    <location>
        <begin position="37"/>
        <end position="48"/>
    </location>
</feature>
<feature type="disulfide bond" evidence="7">
    <location>
        <begin position="65"/>
        <end position="91"/>
    </location>
</feature>
<feature type="disulfide bond" evidence="7">
    <location>
        <begin position="100"/>
        <end position="115"/>
    </location>
</feature>
<feature type="disulfide bond" evidence="7">
    <location>
        <begin position="119"/>
        <end position="124"/>
    </location>
</feature>
<comment type="function">
    <text evidence="3 4">Involved in tracheal paracellular barrier functions mediated by epithelial cell septate junctions (PubMed:19502482). Involved in paracellular barrier functions mediated by glial cell septate junctions in the peripheral nervous system, including the chordotonal organs, but not the hemolymph-brain barrier (the insect blood-brain barrier) of the central nervous system (PubMed:19502482). Required for septate junction assembly, possibly by organizing the preassembly and transport of septate junction proteins such as dlg1/disks large 1, Nrx-IV/Neurexin-IV and the claudin protein kune (PubMed:19502482, PubMed:28977027). Involved in chitin fiber organization during tracheal development (PubMed:19502482). Secreted, possibly in association with extracellular vesicles, to act non-autonomously on tissues distant from its site of expression (PubMed:19502482, PubMed:28977027).</text>
</comment>
<comment type="subcellular location">
    <subcellularLocation>
        <location evidence="3">Cell membrane</location>
        <topology evidence="3">Lipid-anchor</topology>
        <topology evidence="3">GPI-anchor</topology>
        <orientation evidence="3">Extracellular side</orientation>
    </subcellularLocation>
    <subcellularLocation>
        <location evidence="3">Cell junction</location>
        <location evidence="3">Septate junction</location>
    </subcellularLocation>
    <subcellularLocation>
        <location evidence="3">Cytoplasm</location>
        <location evidence="3">Cell cortex</location>
    </subcellularLocation>
    <subcellularLocation>
        <location evidence="3">Secreted</location>
    </subcellularLocation>
    <subcellularLocation>
        <location evidence="4">Apicolateral cell membrane</location>
        <topology evidence="3">Lipid-anchor</topology>
        <topology evidence="3">GPI-anchor</topology>
        <orientation evidence="3">Extracellular side</orientation>
    </subcellularLocation>
    <text evidence="3 4">Accumulates in the apical cell cortex, possibly associated with secretory vesicles (PubMed:19502482). Cell membrane localization includes, but is not restricted to, the septate junction region (PubMed:19502482, PubMed:28977027). The secreted form, potentially associated with extracellular vesicles called 'boudosomes' via its GPI-anchor, diffuses through the extracellular space and is endocytosed by distant cells and incorporated into their cell membrane, where it co-localizes with septate junctions (PubMed:19502482, PubMed:28977027).</text>
</comment>
<comment type="developmental stage">
    <text evidence="3">Expressed ubiquitously in stage 4 (blastoderm) embryos, accumulating in the invaginating mesoderm by stage 6 (PubMed:19502482). Strongly expressed in the hindgut, foregut, salivary gland and trachea with lower expression levels in the epidermis of stage 13 and 14 embryos, after which expression slowly declines and is limited to ectodermal tissues (PubMed:19502482).</text>
</comment>
<comment type="domain">
    <text evidence="3">The C-terminal transmembrane domain, directly involved in membrane association or indirectly through facilitating GPI-anchorage, is required for autonomous activity in cells expressing bou/boudin and non-autonomous activity on remote tissues (PubMed:19502482). This region is required for exit from the endoplasmic reticulum (PubMed:19502482).</text>
</comment>
<comment type="PTM">
    <text evidence="3">GPI-anchored.</text>
</comment>
<comment type="disruption phenotype">
    <text evidence="3">Embryonic lethal (PubMed:19502482). Elongated and convoluted tracheal dorsal trunk with tracheal lumen expansion defects in stage 16 embryos (PubMed:19502482). Some disorganization of chitin fibers in the trachea (PubMed:19502482).</text>
</comment>
<comment type="miscellaneous">
    <text evidence="7">'Boudin' is an Anglo-Norman word meaning 'sausage' (specifically blood sausage) or 'entrails'. Mutant larvae exhibit developmental defects resulting in an abnormal tracheal network structure with the dorsal trunk adopting bulging cysts resembling a string of sausages.</text>
</comment>
<reference evidence="11" key="1">
    <citation type="journal article" date="2000" name="Science">
        <title>The genome sequence of Drosophila melanogaster.</title>
        <authorList>
            <person name="Adams M.D."/>
            <person name="Celniker S.E."/>
            <person name="Holt R.A."/>
            <person name="Evans C.A."/>
            <person name="Gocayne J.D."/>
            <person name="Amanatides P.G."/>
            <person name="Scherer S.E."/>
            <person name="Li P.W."/>
            <person name="Hoskins R.A."/>
            <person name="Galle R.F."/>
            <person name="George R.A."/>
            <person name="Lewis S.E."/>
            <person name="Richards S."/>
            <person name="Ashburner M."/>
            <person name="Henderson S.N."/>
            <person name="Sutton G.G."/>
            <person name="Wortman J.R."/>
            <person name="Yandell M.D."/>
            <person name="Zhang Q."/>
            <person name="Chen L.X."/>
            <person name="Brandon R.C."/>
            <person name="Rogers Y.-H.C."/>
            <person name="Blazej R.G."/>
            <person name="Champe M."/>
            <person name="Pfeiffer B.D."/>
            <person name="Wan K.H."/>
            <person name="Doyle C."/>
            <person name="Baxter E.G."/>
            <person name="Helt G."/>
            <person name="Nelson C.R."/>
            <person name="Miklos G.L.G."/>
            <person name="Abril J.F."/>
            <person name="Agbayani A."/>
            <person name="An H.-J."/>
            <person name="Andrews-Pfannkoch C."/>
            <person name="Baldwin D."/>
            <person name="Ballew R.M."/>
            <person name="Basu A."/>
            <person name="Baxendale J."/>
            <person name="Bayraktaroglu L."/>
            <person name="Beasley E.M."/>
            <person name="Beeson K.Y."/>
            <person name="Benos P.V."/>
            <person name="Berman B.P."/>
            <person name="Bhandari D."/>
            <person name="Bolshakov S."/>
            <person name="Borkova D."/>
            <person name="Botchan M.R."/>
            <person name="Bouck J."/>
            <person name="Brokstein P."/>
            <person name="Brottier P."/>
            <person name="Burtis K.C."/>
            <person name="Busam D.A."/>
            <person name="Butler H."/>
            <person name="Cadieu E."/>
            <person name="Center A."/>
            <person name="Chandra I."/>
            <person name="Cherry J.M."/>
            <person name="Cawley S."/>
            <person name="Dahlke C."/>
            <person name="Davenport L.B."/>
            <person name="Davies P."/>
            <person name="de Pablos B."/>
            <person name="Delcher A."/>
            <person name="Deng Z."/>
            <person name="Mays A.D."/>
            <person name="Dew I."/>
            <person name="Dietz S.M."/>
            <person name="Dodson K."/>
            <person name="Doup L.E."/>
            <person name="Downes M."/>
            <person name="Dugan-Rocha S."/>
            <person name="Dunkov B.C."/>
            <person name="Dunn P."/>
            <person name="Durbin K.J."/>
            <person name="Evangelista C.C."/>
            <person name="Ferraz C."/>
            <person name="Ferriera S."/>
            <person name="Fleischmann W."/>
            <person name="Fosler C."/>
            <person name="Gabrielian A.E."/>
            <person name="Garg N.S."/>
            <person name="Gelbart W.M."/>
            <person name="Glasser K."/>
            <person name="Glodek A."/>
            <person name="Gong F."/>
            <person name="Gorrell J.H."/>
            <person name="Gu Z."/>
            <person name="Guan P."/>
            <person name="Harris M."/>
            <person name="Harris N.L."/>
            <person name="Harvey D.A."/>
            <person name="Heiman T.J."/>
            <person name="Hernandez J.R."/>
            <person name="Houck J."/>
            <person name="Hostin D."/>
            <person name="Houston K.A."/>
            <person name="Howland T.J."/>
            <person name="Wei M.-H."/>
            <person name="Ibegwam C."/>
            <person name="Jalali M."/>
            <person name="Kalush F."/>
            <person name="Karpen G.H."/>
            <person name="Ke Z."/>
            <person name="Kennison J.A."/>
            <person name="Ketchum K.A."/>
            <person name="Kimmel B.E."/>
            <person name="Kodira C.D."/>
            <person name="Kraft C.L."/>
            <person name="Kravitz S."/>
            <person name="Kulp D."/>
            <person name="Lai Z."/>
            <person name="Lasko P."/>
            <person name="Lei Y."/>
            <person name="Levitsky A.A."/>
            <person name="Li J.H."/>
            <person name="Li Z."/>
            <person name="Liang Y."/>
            <person name="Lin X."/>
            <person name="Liu X."/>
            <person name="Mattei B."/>
            <person name="McIntosh T.C."/>
            <person name="McLeod M.P."/>
            <person name="McPherson D."/>
            <person name="Merkulov G."/>
            <person name="Milshina N.V."/>
            <person name="Mobarry C."/>
            <person name="Morris J."/>
            <person name="Moshrefi A."/>
            <person name="Mount S.M."/>
            <person name="Moy M."/>
            <person name="Murphy B."/>
            <person name="Murphy L."/>
            <person name="Muzny D.M."/>
            <person name="Nelson D.L."/>
            <person name="Nelson D.R."/>
            <person name="Nelson K.A."/>
            <person name="Nixon K."/>
            <person name="Nusskern D.R."/>
            <person name="Pacleb J.M."/>
            <person name="Palazzolo M."/>
            <person name="Pittman G.S."/>
            <person name="Pan S."/>
            <person name="Pollard J."/>
            <person name="Puri V."/>
            <person name="Reese M.G."/>
            <person name="Reinert K."/>
            <person name="Remington K."/>
            <person name="Saunders R.D.C."/>
            <person name="Scheeler F."/>
            <person name="Shen H."/>
            <person name="Shue B.C."/>
            <person name="Siden-Kiamos I."/>
            <person name="Simpson M."/>
            <person name="Skupski M.P."/>
            <person name="Smith T.J."/>
            <person name="Spier E."/>
            <person name="Spradling A.C."/>
            <person name="Stapleton M."/>
            <person name="Strong R."/>
            <person name="Sun E."/>
            <person name="Svirskas R."/>
            <person name="Tector C."/>
            <person name="Turner R."/>
            <person name="Venter E."/>
            <person name="Wang A.H."/>
            <person name="Wang X."/>
            <person name="Wang Z.-Y."/>
            <person name="Wassarman D.A."/>
            <person name="Weinstock G.M."/>
            <person name="Weissenbach J."/>
            <person name="Williams S.M."/>
            <person name="Woodage T."/>
            <person name="Worley K.C."/>
            <person name="Wu D."/>
            <person name="Yang S."/>
            <person name="Yao Q.A."/>
            <person name="Ye J."/>
            <person name="Yeh R.-F."/>
            <person name="Zaveri J.S."/>
            <person name="Zhan M."/>
            <person name="Zhang G."/>
            <person name="Zhao Q."/>
            <person name="Zheng L."/>
            <person name="Zheng X.H."/>
            <person name="Zhong F.N."/>
            <person name="Zhong W."/>
            <person name="Zhou X."/>
            <person name="Zhu S.C."/>
            <person name="Zhu X."/>
            <person name="Smith H.O."/>
            <person name="Gibbs R.A."/>
            <person name="Myers E.W."/>
            <person name="Rubin G.M."/>
            <person name="Venter J.C."/>
        </authorList>
    </citation>
    <scope>NUCLEOTIDE SEQUENCE [LARGE SCALE GENOMIC DNA]</scope>
    <source>
        <strain evidence="11">Berkeley</strain>
    </source>
</reference>
<reference evidence="11" key="2">
    <citation type="journal article" date="2002" name="Genome Biol.">
        <title>Annotation of the Drosophila melanogaster euchromatic genome: a systematic review.</title>
        <authorList>
            <person name="Misra S."/>
            <person name="Crosby M.A."/>
            <person name="Mungall C.J."/>
            <person name="Matthews B.B."/>
            <person name="Campbell K.S."/>
            <person name="Hradecky P."/>
            <person name="Huang Y."/>
            <person name="Kaminker J.S."/>
            <person name="Millburn G.H."/>
            <person name="Prochnik S.E."/>
            <person name="Smith C.D."/>
            <person name="Tupy J.L."/>
            <person name="Whitfield E.J."/>
            <person name="Bayraktaroglu L."/>
            <person name="Berman B.P."/>
            <person name="Bettencourt B.R."/>
            <person name="Celniker S.E."/>
            <person name="de Grey A.D.N.J."/>
            <person name="Drysdale R.A."/>
            <person name="Harris N.L."/>
            <person name="Richter J."/>
            <person name="Russo S."/>
            <person name="Schroeder A.J."/>
            <person name="Shu S.Q."/>
            <person name="Stapleton M."/>
            <person name="Yamada C."/>
            <person name="Ashburner M."/>
            <person name="Gelbart W.M."/>
            <person name="Rubin G.M."/>
            <person name="Lewis S.E."/>
        </authorList>
    </citation>
    <scope>GENOME REANNOTATION</scope>
    <source>
        <strain evidence="11">Berkeley</strain>
    </source>
</reference>
<reference evidence="8" key="3">
    <citation type="journal article" date="2002" name="Genome Biol.">
        <title>A Drosophila full-length cDNA resource.</title>
        <authorList>
            <person name="Stapleton M."/>
            <person name="Carlson J.W."/>
            <person name="Brokstein P."/>
            <person name="Yu C."/>
            <person name="Champe M."/>
            <person name="George R.A."/>
            <person name="Guarin H."/>
            <person name="Kronmiller B."/>
            <person name="Pacleb J.M."/>
            <person name="Park S."/>
            <person name="Wan K.H."/>
            <person name="Rubin G.M."/>
            <person name="Celniker S.E."/>
        </authorList>
    </citation>
    <scope>NUCLEOTIDE SEQUENCE [LARGE SCALE MRNA]</scope>
    <source>
        <strain evidence="8">Berkeley</strain>
        <tissue evidence="8">Embryo</tissue>
    </source>
</reference>
<reference evidence="9" key="4">
    <citation type="submission" date="2016-07" db="EMBL/GenBank/DDBJ databases">
        <authorList>
            <person name="Wan K."/>
            <person name="Booth B."/>
            <person name="Spirohn K."/>
            <person name="Hao T."/>
            <person name="Hu Y."/>
            <person name="Calderwood M."/>
            <person name="Hill D."/>
            <person name="Mohr S."/>
            <person name="Vidal M."/>
            <person name="Celniker S."/>
            <person name="Perrimon N."/>
        </authorList>
    </citation>
    <scope>NUCLEOTIDE SEQUENCE [LARGE SCALE MRNA]</scope>
</reference>
<reference evidence="6" key="5">
    <citation type="journal article" date="2009" name="Development">
        <title>boudin is required for septate junction organisation in Drosophila and codes for a diffusible protein of the Ly6 superfamily.</title>
        <authorList>
            <person name="Hijazi A."/>
            <person name="Masson W."/>
            <person name="Auge B."/>
            <person name="Waltzer L."/>
            <person name="Haenlin M."/>
            <person name="Roch F."/>
        </authorList>
    </citation>
    <scope>FUNCTION</scope>
    <scope>SUBCELLULAR LOCATION</scope>
    <scope>DEVELOPMENTAL STAGE</scope>
    <scope>DOMAIN</scope>
    <scope>GPI-ANCHOR</scope>
    <scope>DISRUPTION PHENOTYPE</scope>
</reference>
<reference evidence="6" key="6">
    <citation type="journal article" date="2017" name="PLoS ONE">
        <title>Boudin trafficking reveals the dynamic internalisation of specific septate junction components in Drosophila.</title>
        <authorList>
            <person name="Tempesta C."/>
            <person name="Hijazi A."/>
            <person name="Moussian B."/>
            <person name="Roch F."/>
        </authorList>
    </citation>
    <scope>FUNCTION</scope>
    <scope>SUBCELLULAR LOCATION</scope>
</reference>
<name>BOUD_DROME</name>
<gene>
    <name evidence="10" type="primary">bou</name>
    <name evidence="10" type="synonym">jnL4</name>
    <name evidence="10" type="synonym">JNXL4</name>
    <name evidence="10" type="ORF">CG14430</name>
</gene>
<proteinExistence type="evidence at protein level"/>
<sequence>MWPPKHAHIGWLSSLALVVLLMSLQMVMVSGIECYVCDTSDTEHPFQCGEWFERYDIPDIQPQNCSSVHGAQFCVKHVGRFEGGIGAKRFCSSKDMGNYCDYVRNKGDRMDYRSCIYTCDTDGCNAAGRLELEWGVAAALLTLTWLLRH</sequence>
<protein>
    <recommendedName>
        <fullName evidence="6">UPAR/Ly6 domain-containing protein bou</fullName>
    </recommendedName>
    <alternativeName>
        <fullName evidence="5">Protein boudin</fullName>
    </alternativeName>
</protein>